<evidence type="ECO:0000250" key="1"/>
<evidence type="ECO:0000250" key="2">
    <source>
        <dbReference type="UniProtKB" id="Q9BRP1"/>
    </source>
</evidence>
<evidence type="ECO:0000256" key="3">
    <source>
        <dbReference type="SAM" id="MobiDB-lite"/>
    </source>
</evidence>
<evidence type="ECO:0000305" key="4"/>
<comment type="function">
    <text evidence="1">Over-expression suppresses AP1, CREB, NFAT, and NF-kB transcriptional activation, and delays cell cycle progression at S phase.</text>
</comment>
<feature type="initiator methionine" description="Removed" evidence="2">
    <location>
        <position position="1"/>
    </location>
</feature>
<feature type="chain" id="PRO_0000272646" description="Programmed cell death protein 2-like">
    <location>
        <begin position="2"/>
        <end position="364"/>
    </location>
</feature>
<feature type="region of interest" description="Disordered" evidence="3">
    <location>
        <begin position="125"/>
        <end position="150"/>
    </location>
</feature>
<feature type="modified residue" description="N-acetylalanine" evidence="2">
    <location>
        <position position="2"/>
    </location>
</feature>
<feature type="sequence conflict" description="In Ref. 1; BAB22726." evidence="4" ref="1">
    <original>S</original>
    <variation>T</variation>
    <location>
        <position position="92"/>
    </location>
</feature>
<feature type="sequence conflict" description="In Ref. 1; BAB22726." evidence="4" ref="1">
    <original>L</original>
    <variation>V</variation>
    <location>
        <position position="118"/>
    </location>
</feature>
<keyword id="KW-0007">Acetylation</keyword>
<keyword id="KW-0131">Cell cycle</keyword>
<keyword id="KW-1185">Reference proteome</keyword>
<accession>Q8C5N5</accession>
<accession>Q8R185</accession>
<accession>Q9D1M3</accession>
<protein>
    <recommendedName>
        <fullName>Programmed cell death protein 2-like</fullName>
    </recommendedName>
</protein>
<reference key="1">
    <citation type="journal article" date="2005" name="Science">
        <title>The transcriptional landscape of the mammalian genome.</title>
        <authorList>
            <person name="Carninci P."/>
            <person name="Kasukawa T."/>
            <person name="Katayama S."/>
            <person name="Gough J."/>
            <person name="Frith M.C."/>
            <person name="Maeda N."/>
            <person name="Oyama R."/>
            <person name="Ravasi T."/>
            <person name="Lenhard B."/>
            <person name="Wells C."/>
            <person name="Kodzius R."/>
            <person name="Shimokawa K."/>
            <person name="Bajic V.B."/>
            <person name="Brenner S.E."/>
            <person name="Batalov S."/>
            <person name="Forrest A.R."/>
            <person name="Zavolan M."/>
            <person name="Davis M.J."/>
            <person name="Wilming L.G."/>
            <person name="Aidinis V."/>
            <person name="Allen J.E."/>
            <person name="Ambesi-Impiombato A."/>
            <person name="Apweiler R."/>
            <person name="Aturaliya R.N."/>
            <person name="Bailey T.L."/>
            <person name="Bansal M."/>
            <person name="Baxter L."/>
            <person name="Beisel K.W."/>
            <person name="Bersano T."/>
            <person name="Bono H."/>
            <person name="Chalk A.M."/>
            <person name="Chiu K.P."/>
            <person name="Choudhary V."/>
            <person name="Christoffels A."/>
            <person name="Clutterbuck D.R."/>
            <person name="Crowe M.L."/>
            <person name="Dalla E."/>
            <person name="Dalrymple B.P."/>
            <person name="de Bono B."/>
            <person name="Della Gatta G."/>
            <person name="di Bernardo D."/>
            <person name="Down T."/>
            <person name="Engstrom P."/>
            <person name="Fagiolini M."/>
            <person name="Faulkner G."/>
            <person name="Fletcher C.F."/>
            <person name="Fukushima T."/>
            <person name="Furuno M."/>
            <person name="Futaki S."/>
            <person name="Gariboldi M."/>
            <person name="Georgii-Hemming P."/>
            <person name="Gingeras T.R."/>
            <person name="Gojobori T."/>
            <person name="Green R.E."/>
            <person name="Gustincich S."/>
            <person name="Harbers M."/>
            <person name="Hayashi Y."/>
            <person name="Hensch T.K."/>
            <person name="Hirokawa N."/>
            <person name="Hill D."/>
            <person name="Huminiecki L."/>
            <person name="Iacono M."/>
            <person name="Ikeo K."/>
            <person name="Iwama A."/>
            <person name="Ishikawa T."/>
            <person name="Jakt M."/>
            <person name="Kanapin A."/>
            <person name="Katoh M."/>
            <person name="Kawasawa Y."/>
            <person name="Kelso J."/>
            <person name="Kitamura H."/>
            <person name="Kitano H."/>
            <person name="Kollias G."/>
            <person name="Krishnan S.P."/>
            <person name="Kruger A."/>
            <person name="Kummerfeld S.K."/>
            <person name="Kurochkin I.V."/>
            <person name="Lareau L.F."/>
            <person name="Lazarevic D."/>
            <person name="Lipovich L."/>
            <person name="Liu J."/>
            <person name="Liuni S."/>
            <person name="McWilliam S."/>
            <person name="Madan Babu M."/>
            <person name="Madera M."/>
            <person name="Marchionni L."/>
            <person name="Matsuda H."/>
            <person name="Matsuzawa S."/>
            <person name="Miki H."/>
            <person name="Mignone F."/>
            <person name="Miyake S."/>
            <person name="Morris K."/>
            <person name="Mottagui-Tabar S."/>
            <person name="Mulder N."/>
            <person name="Nakano N."/>
            <person name="Nakauchi H."/>
            <person name="Ng P."/>
            <person name="Nilsson R."/>
            <person name="Nishiguchi S."/>
            <person name="Nishikawa S."/>
            <person name="Nori F."/>
            <person name="Ohara O."/>
            <person name="Okazaki Y."/>
            <person name="Orlando V."/>
            <person name="Pang K.C."/>
            <person name="Pavan W.J."/>
            <person name="Pavesi G."/>
            <person name="Pesole G."/>
            <person name="Petrovsky N."/>
            <person name="Piazza S."/>
            <person name="Reed J."/>
            <person name="Reid J.F."/>
            <person name="Ring B.Z."/>
            <person name="Ringwald M."/>
            <person name="Rost B."/>
            <person name="Ruan Y."/>
            <person name="Salzberg S.L."/>
            <person name="Sandelin A."/>
            <person name="Schneider C."/>
            <person name="Schoenbach C."/>
            <person name="Sekiguchi K."/>
            <person name="Semple C.A."/>
            <person name="Seno S."/>
            <person name="Sessa L."/>
            <person name="Sheng Y."/>
            <person name="Shibata Y."/>
            <person name="Shimada H."/>
            <person name="Shimada K."/>
            <person name="Silva D."/>
            <person name="Sinclair B."/>
            <person name="Sperling S."/>
            <person name="Stupka E."/>
            <person name="Sugiura K."/>
            <person name="Sultana R."/>
            <person name="Takenaka Y."/>
            <person name="Taki K."/>
            <person name="Tammoja K."/>
            <person name="Tan S.L."/>
            <person name="Tang S."/>
            <person name="Taylor M.S."/>
            <person name="Tegner J."/>
            <person name="Teichmann S.A."/>
            <person name="Ueda H.R."/>
            <person name="van Nimwegen E."/>
            <person name="Verardo R."/>
            <person name="Wei C.L."/>
            <person name="Yagi K."/>
            <person name="Yamanishi H."/>
            <person name="Zabarovsky E."/>
            <person name="Zhu S."/>
            <person name="Zimmer A."/>
            <person name="Hide W."/>
            <person name="Bult C."/>
            <person name="Grimmond S.M."/>
            <person name="Teasdale R.D."/>
            <person name="Liu E.T."/>
            <person name="Brusic V."/>
            <person name="Quackenbush J."/>
            <person name="Wahlestedt C."/>
            <person name="Mattick J.S."/>
            <person name="Hume D.A."/>
            <person name="Kai C."/>
            <person name="Sasaki D."/>
            <person name="Tomaru Y."/>
            <person name="Fukuda S."/>
            <person name="Kanamori-Katayama M."/>
            <person name="Suzuki M."/>
            <person name="Aoki J."/>
            <person name="Arakawa T."/>
            <person name="Iida J."/>
            <person name="Imamura K."/>
            <person name="Itoh M."/>
            <person name="Kato T."/>
            <person name="Kawaji H."/>
            <person name="Kawagashira N."/>
            <person name="Kawashima T."/>
            <person name="Kojima M."/>
            <person name="Kondo S."/>
            <person name="Konno H."/>
            <person name="Nakano K."/>
            <person name="Ninomiya N."/>
            <person name="Nishio T."/>
            <person name="Okada M."/>
            <person name="Plessy C."/>
            <person name="Shibata K."/>
            <person name="Shiraki T."/>
            <person name="Suzuki S."/>
            <person name="Tagami M."/>
            <person name="Waki K."/>
            <person name="Watahiki A."/>
            <person name="Okamura-Oho Y."/>
            <person name="Suzuki H."/>
            <person name="Kawai J."/>
            <person name="Hayashizaki Y."/>
        </authorList>
    </citation>
    <scope>NUCLEOTIDE SEQUENCE [LARGE SCALE MRNA]</scope>
    <source>
        <strain>C57BL/6J</strain>
        <strain>NOD</strain>
        <tissue>Bone marrow</tissue>
        <tissue>Embryo</tissue>
        <tissue>Testis</tissue>
    </source>
</reference>
<reference key="2">
    <citation type="journal article" date="2004" name="Genome Res.">
        <title>The status, quality, and expansion of the NIH full-length cDNA project: the Mammalian Gene Collection (MGC).</title>
        <authorList>
            <consortium name="The MGC Project Team"/>
        </authorList>
    </citation>
    <scope>NUCLEOTIDE SEQUENCE [LARGE SCALE MRNA]</scope>
    <source>
        <tissue>Mammary tumor</tissue>
    </source>
</reference>
<reference key="3">
    <citation type="journal article" date="2010" name="Cell">
        <title>A tissue-specific atlas of mouse protein phosphorylation and expression.</title>
        <authorList>
            <person name="Huttlin E.L."/>
            <person name="Jedrychowski M.P."/>
            <person name="Elias J.E."/>
            <person name="Goswami T."/>
            <person name="Rad R."/>
            <person name="Beausoleil S.A."/>
            <person name="Villen J."/>
            <person name="Haas W."/>
            <person name="Sowa M.E."/>
            <person name="Gygi S.P."/>
        </authorList>
    </citation>
    <scope>IDENTIFICATION BY MASS SPECTROMETRY [LARGE SCALE ANALYSIS]</scope>
    <source>
        <tissue>Testis</tissue>
    </source>
</reference>
<organism>
    <name type="scientific">Mus musculus</name>
    <name type="common">Mouse</name>
    <dbReference type="NCBI Taxonomy" id="10090"/>
    <lineage>
        <taxon>Eukaryota</taxon>
        <taxon>Metazoa</taxon>
        <taxon>Chordata</taxon>
        <taxon>Craniata</taxon>
        <taxon>Vertebrata</taxon>
        <taxon>Euteleostomi</taxon>
        <taxon>Mammalia</taxon>
        <taxon>Eutheria</taxon>
        <taxon>Euarchontoglires</taxon>
        <taxon>Glires</taxon>
        <taxon>Rodentia</taxon>
        <taxon>Myomorpha</taxon>
        <taxon>Muroidea</taxon>
        <taxon>Muridae</taxon>
        <taxon>Murinae</taxon>
        <taxon>Mus</taxon>
        <taxon>Mus</taxon>
    </lineage>
</organism>
<proteinExistence type="evidence at protein level"/>
<name>PDD2L_MOUSE</name>
<dbReference type="EMBL" id="AK003339">
    <property type="protein sequence ID" value="BAB22726.1"/>
    <property type="molecule type" value="mRNA"/>
</dbReference>
<dbReference type="EMBL" id="AK077948">
    <property type="protein sequence ID" value="BAC37080.1"/>
    <property type="molecule type" value="mRNA"/>
</dbReference>
<dbReference type="EMBL" id="AK151495">
    <property type="protein sequence ID" value="BAE30447.1"/>
    <property type="molecule type" value="mRNA"/>
</dbReference>
<dbReference type="EMBL" id="AK154811">
    <property type="protein sequence ID" value="BAE32845.1"/>
    <property type="molecule type" value="mRNA"/>
</dbReference>
<dbReference type="EMBL" id="BC025090">
    <property type="protein sequence ID" value="AAH25090.1"/>
    <property type="molecule type" value="mRNA"/>
</dbReference>
<dbReference type="EMBL" id="BC115797">
    <property type="protein sequence ID" value="AAI15798.1"/>
    <property type="molecule type" value="mRNA"/>
</dbReference>
<dbReference type="CCDS" id="CCDS21137.1"/>
<dbReference type="RefSeq" id="NP_080825.1">
    <property type="nucleotide sequence ID" value="NM_026549.4"/>
</dbReference>
<dbReference type="BioGRID" id="212644">
    <property type="interactions" value="4"/>
</dbReference>
<dbReference type="FunCoup" id="Q8C5N5">
    <property type="interactions" value="1487"/>
</dbReference>
<dbReference type="STRING" id="10090.ENSMUSP00000002710"/>
<dbReference type="iPTMnet" id="Q8C5N5"/>
<dbReference type="PhosphoSitePlus" id="Q8C5N5"/>
<dbReference type="SwissPalm" id="Q8C5N5"/>
<dbReference type="PaxDb" id="10090-ENSMUSP00000002710"/>
<dbReference type="ProteomicsDB" id="287902"/>
<dbReference type="Pumba" id="Q8C5N5"/>
<dbReference type="DNASU" id="68079"/>
<dbReference type="Ensembl" id="ENSMUST00000002710.10">
    <property type="protein sequence ID" value="ENSMUSP00000002710.4"/>
    <property type="gene ID" value="ENSMUSG00000002635.12"/>
</dbReference>
<dbReference type="GeneID" id="68079"/>
<dbReference type="KEGG" id="mmu:68079"/>
<dbReference type="UCSC" id="uc009giw.1">
    <property type="organism name" value="mouse"/>
</dbReference>
<dbReference type="AGR" id="MGI:1915329"/>
<dbReference type="CTD" id="84306"/>
<dbReference type="MGI" id="MGI:1915329">
    <property type="gene designation" value="Pdcd2l"/>
</dbReference>
<dbReference type="VEuPathDB" id="HostDB:ENSMUSG00000002635"/>
<dbReference type="eggNOG" id="KOG2061">
    <property type="taxonomic scope" value="Eukaryota"/>
</dbReference>
<dbReference type="GeneTree" id="ENSGT00940000158339"/>
<dbReference type="HOGENOM" id="CLU_034893_1_0_1"/>
<dbReference type="InParanoid" id="Q8C5N5"/>
<dbReference type="OMA" id="MPGPWAD"/>
<dbReference type="OrthoDB" id="366284at2759"/>
<dbReference type="PhylomeDB" id="Q8C5N5"/>
<dbReference type="TreeFam" id="TF354282"/>
<dbReference type="BioGRID-ORCS" id="68079">
    <property type="hits" value="9 hits in 80 CRISPR screens"/>
</dbReference>
<dbReference type="ChiTaRS" id="Pdcd2l">
    <property type="organism name" value="mouse"/>
</dbReference>
<dbReference type="PRO" id="PR:Q8C5N5"/>
<dbReference type="Proteomes" id="UP000000589">
    <property type="component" value="Chromosome 7"/>
</dbReference>
<dbReference type="RNAct" id="Q8C5N5">
    <property type="molecule type" value="protein"/>
</dbReference>
<dbReference type="Bgee" id="ENSMUSG00000002635">
    <property type="expression patterns" value="Expressed in primary oocyte and 262 other cell types or tissues"/>
</dbReference>
<dbReference type="ExpressionAtlas" id="Q8C5N5">
    <property type="expression patterns" value="baseline and differential"/>
</dbReference>
<dbReference type="GO" id="GO:0005737">
    <property type="term" value="C:cytoplasm"/>
    <property type="evidence" value="ECO:0007669"/>
    <property type="project" value="InterPro"/>
</dbReference>
<dbReference type="Gene3D" id="2.30.320.10">
    <property type="entry name" value="YwqG-like"/>
    <property type="match status" value="1"/>
</dbReference>
<dbReference type="InterPro" id="IPR052815">
    <property type="entry name" value="PDCD2-like_regulator"/>
</dbReference>
<dbReference type="InterPro" id="IPR007320">
    <property type="entry name" value="PDCD2_C"/>
</dbReference>
<dbReference type="PANTHER" id="PTHR46421">
    <property type="entry name" value="PROGRAMMED CELL DEATH PROTEIN 2-LIKE"/>
    <property type="match status" value="1"/>
</dbReference>
<dbReference type="PANTHER" id="PTHR46421:SF1">
    <property type="entry name" value="PROGRAMMED CELL DEATH PROTEIN 2-LIKE"/>
    <property type="match status" value="1"/>
</dbReference>
<dbReference type="Pfam" id="PF04194">
    <property type="entry name" value="PDCD2_C"/>
    <property type="match status" value="1"/>
</dbReference>
<sequence length="364" mass="39955">MAAVRKPVLLGLRDTAVKGCPKGPSAWTSSKLGGVPDALPAVTTPGPQCGRCAQPLTLVVQVYCPLDGSPFHRLLYVFACARPGCGNSQTRSWKVFRSQCLQVPEKETWNAQNQSDSLAAENWCEGSQDWGSDTEETPPPPASDLGSDSNDVRALDWTEKLQALRLQDTALAVTCPSPSGEGLTVPTAVPQFQPYYICVAEEEDYGSVVDLDHAHSLLQEYQRREGVDMEQLLSLGSSDGDEKYEKTTVSSGDPTFYRFMKRIAACQEQILRYSWSGEPLFLSCPTFEVSEVPACSGCGGQRTFEFQLMPALVSMLSSANLGLAVEFGTILVYTCKQSCWPPNQQMPMEEFCVLQEDPDEFLFK</sequence>
<gene>
    <name type="primary">Pdcd2l</name>
</gene>